<dbReference type="GO" id="GO:0005576">
    <property type="term" value="C:extracellular region"/>
    <property type="evidence" value="ECO:0007669"/>
    <property type="project" value="UniProtKB-SubCell"/>
</dbReference>
<dbReference type="GO" id="GO:0007218">
    <property type="term" value="P:neuropeptide signaling pathway"/>
    <property type="evidence" value="ECO:0007669"/>
    <property type="project" value="UniProtKB-KW"/>
</dbReference>
<evidence type="ECO:0000255" key="1"/>
<evidence type="ECO:0000256" key="2">
    <source>
        <dbReference type="SAM" id="MobiDB-lite"/>
    </source>
</evidence>
<evidence type="ECO:0000269" key="3">
    <source>
    </source>
</evidence>
<evidence type="ECO:0000303" key="4">
    <source>
    </source>
</evidence>
<evidence type="ECO:0000305" key="5"/>
<comment type="subcellular location">
    <subcellularLocation>
        <location evidence="5">Secreted</location>
    </subcellularLocation>
</comment>
<comment type="tissue specificity">
    <text evidence="3">Neuropeptide-like precursor 1-1: Expressed in antennal lobe (AL), corpora cardiaca (CC), corpora allata (CA) and gnathal ganglion (GNG) (at protein level). Expression in AL detected in all animals, in GNG in most animals, expression in CC and CA in few animals (at protein level). Neuropeptide-like precursor 1-2: Expressed in antennal lobe (AL), corpora cardiaca (CC), corpora allata (CA) and gnathal ganglion (GNG) (at protein level). Expression in AL detected in all animals, in GNG in some animals, expression in CC and CA in few animals (at protein level). Neuropeptide-like precursor 1-3: Not expressed in antennal lobe (AL), corpora cardiaca (CC), corpora allata (CA) and gnathal ganglion (GNG) (at protein level). Neuropeptide-like precursor 1-4: Expressed in antennal lobe (AL) and gnathal ganglion (GNG) (at protein level). Expression in AL detected in most animals, in GNG in some animals (at protein level). Not expressed in CC and CA (at protein level). YRVamide: Expressed in antennal lobe (AL), corpora cardiaca (CC), corpora allata (CA) and gnathal ganglion (GNG) (at protein level). Expression in AL and GNG detected in most animals, expression in CC and CA in few animals (at protein level). Extended YRVamide: Expressed in antennal lobe (AL) and gnathal ganglion (GNG) (at protein level). Expression in AL detected in most animals, in GNG in some animals (at protein level). Not expressed in corpora cardiaca (CC) and corpora allata (CA) (at protein level). Neuropeptide-like precursor 1-6: Expressed in antennal lobe (AL), corpora cardiaca (CC), corpora allata (CA) and gnathal ganglion (GNG) (at protein level). Expression in GNG detected in all animals, expression in AL in most animals, in CC and CA in few animals (at protein level). Neuropeptide-like precursor 1-6(1-11): Expressed in antennal lobe (AL) and gnathal ganglion (GNG) in most animals (at protein level). Not expressed in corpora cardiaca (CC) and corpora allata (CA) (at protein level). Neuropeptide-like precursor 1-9: Expressed in antennal lobe (AL) and gnathal ganglion (GNG) (at protein level). Expression in AL detected in all animals in GNG in most (at protein level). Not expressed in corpora cardiaca (CC) and corpora allata (CA) (at protein level).</text>
</comment>
<comment type="mass spectrometry">
    <molecule>Neuropeptide-like precursor 1-1</molecule>
    <text>Neuropeptide-like precursor 1-1.</text>
</comment>
<comment type="mass spectrometry">
    <molecule>Neuropeptide-like precursor 1-2</molecule>
    <text>Neuropeptide-like precursor 1-2.</text>
</comment>
<comment type="mass spectrometry">
    <molecule>Neuropeptide-like precursor 1-3</molecule>
    <text>Neuropeptide-like precursor 1-3.</text>
</comment>
<comment type="mass spectrometry">
    <molecule>Neuropeptide-like precursor 1-4</molecule>
    <text>Neuropeptide-like precursor 1-4.</text>
</comment>
<comment type="mass spectrometry">
    <molecule>YRVamide</molecule>
    <text>YRVamide.</text>
</comment>
<comment type="mass spectrometry">
    <molecule>Extended YRVamide</molecule>
    <text>Extended YRVamide.</text>
</comment>
<comment type="mass spectrometry">
    <molecule>Neuropeptide-like precursor 1-6(1-11)</molecule>
    <text>Neuropeptide-like precursor 1-6(1-11).</text>
</comment>
<comment type="mass spectrometry">
    <molecule>Neuropeptide-like precursor 1-6</molecule>
    <text>Neuropeptide-like precursor 1-6.</text>
</comment>
<comment type="mass spectrometry">
    <molecule>Neuropeptide-like precursor 1-9</molecule>
    <text>Neuropeptide-like precursor 1-9.</text>
</comment>
<comment type="caution">
    <text evidence="5">Further mature peptides might exist.</text>
</comment>
<sequence>MNDAGASIGRHRGCLLLFVALAVAFSSYVEQVESMPAEPVSQWPTFPRRNIAALARDGYLRNSASRAYKRGISTLAKNGLLPTYRSPYVETDKEDQNQDESQEKRNMASIARLRSYAAMKRNIQALARDGYRVGRGQYNPSNDKRNIAALARNGLLHKKDEATENEYYFPFYQNPIAPLSEIDHPLDVNEMYDFQQSMNPDMFPSMSQVYKRSLYEPYYDYYSPKDYDNSYFKRSSAGSPVHGLYRPNYLEPNTRTKRYVMPYPDILEGDEMIEQNDIDGEKRSVDDDDDDDDDDGEVHENFQKRHIGSLARLGLLPSFRYSGGRYSRSGRARLLLPSQELYRKHSPDENFGIREYLSSPEVESPVDPDDADIPPPPVPAHSHPTGRLLHRPLSNDLPHTSPLPLPPIAPTNYADTFTKNRWQSYTKETPKFYYFRSLKVPYHTSGKRYLLLPAVDNILLRKGYRNSSLPSRRKNQ</sequence>
<keyword id="KW-0027">Amidation</keyword>
<keyword id="KW-0165">Cleavage on pair of basic residues</keyword>
<keyword id="KW-0903">Direct protein sequencing</keyword>
<keyword id="KW-0527">Neuropeptide</keyword>
<keyword id="KW-0964">Secreted</keyword>
<keyword id="KW-0732">Signal</keyword>
<feature type="signal peptide" evidence="1">
    <location>
        <begin position="1"/>
        <end position="34"/>
    </location>
</feature>
<feature type="peptide" id="PRO_0000444250" description="Neuropeptide-like precursor 1-1" evidence="3">
    <location>
        <begin position="35"/>
        <end position="48"/>
    </location>
</feature>
<feature type="peptide" id="PRO_0000444251" description="Neuropeptide-like precursor 1-2" evidence="3">
    <location>
        <begin position="50"/>
        <end position="68"/>
    </location>
</feature>
<feature type="peptide" id="PRO_0000444252" description="Neuropeptide-like precursor 1-3" evidence="3">
    <location>
        <begin position="71"/>
        <end position="103"/>
    </location>
</feature>
<feature type="peptide" id="PRO_0000444253" description="Neuropeptide-like precursor 1-4" evidence="3">
    <location>
        <begin position="106"/>
        <end position="119"/>
    </location>
</feature>
<feature type="peptide" id="PRO_0000444255" description="Extended YRVamide" evidence="3">
    <location>
        <begin position="122"/>
        <end position="143"/>
    </location>
</feature>
<feature type="peptide" id="PRO_0000444254" description="YRVamide" evidence="3">
    <location>
        <begin position="122"/>
        <end position="133"/>
    </location>
</feature>
<feature type="peptide" id="PRO_0000444257" description="Neuropeptide-like precursor 1-6" evidence="3">
    <location>
        <begin position="146"/>
        <end position="157"/>
    </location>
</feature>
<feature type="peptide" id="PRO_0000444256" description="Neuropeptide-like precursor 1-6(1-11)" evidence="3">
    <location>
        <begin position="146"/>
        <end position="156"/>
    </location>
</feature>
<feature type="propeptide" id="PRO_0000444258" evidence="5">
    <location>
        <begin position="160"/>
        <end position="232"/>
    </location>
</feature>
<feature type="peptide" id="PRO_0000444259" description="Neuropeptide-like precursor 1-9" evidence="3">
    <location>
        <begin position="235"/>
        <end position="256"/>
    </location>
</feature>
<feature type="propeptide" id="PRO_0000444260" evidence="5">
    <location>
        <begin position="259"/>
        <end position="476"/>
    </location>
</feature>
<feature type="region of interest" description="Disordered" evidence="2">
    <location>
        <begin position="275"/>
        <end position="298"/>
    </location>
</feature>
<feature type="region of interest" description="Disordered" evidence="2">
    <location>
        <begin position="360"/>
        <end position="385"/>
    </location>
</feature>
<feature type="compositionally biased region" description="Acidic residues" evidence="2">
    <location>
        <begin position="286"/>
        <end position="297"/>
    </location>
</feature>
<feature type="modified residue" description="Valine amide" evidence="3">
    <location>
        <position position="133"/>
    </location>
</feature>
<organism>
    <name type="scientific">Agrotis ipsilon</name>
    <name type="common">Black cutworm moth</name>
    <dbReference type="NCBI Taxonomy" id="56364"/>
    <lineage>
        <taxon>Eukaryota</taxon>
        <taxon>Metazoa</taxon>
        <taxon>Ecdysozoa</taxon>
        <taxon>Arthropoda</taxon>
        <taxon>Hexapoda</taxon>
        <taxon>Insecta</taxon>
        <taxon>Pterygota</taxon>
        <taxon>Neoptera</taxon>
        <taxon>Endopterygota</taxon>
        <taxon>Lepidoptera</taxon>
        <taxon>Glossata</taxon>
        <taxon>Ditrysia</taxon>
        <taxon>Noctuoidea</taxon>
        <taxon>Noctuidae</taxon>
        <taxon>Noctuinae</taxon>
        <taxon>Noctuini</taxon>
        <taxon>Agrotis</taxon>
    </lineage>
</organism>
<name>NPLP1_AGRIP</name>
<accession>C0HKY1</accession>
<accession>C0HKU3</accession>
<accession>C0HKU4</accession>
<accession>C0HKU5</accession>
<accession>C0HKU6</accession>
<accession>C0HKU7</accession>
<accession>C0HKU8</accession>
<protein>
    <recommendedName>
        <fullName evidence="4">Neuropeptide-like precursor 1</fullName>
    </recommendedName>
    <component>
        <recommendedName>
            <fullName evidence="4">Neuropeptide-like precursor 1-1</fullName>
            <shortName evidence="4">NPLP1-1</shortName>
        </recommendedName>
    </component>
    <component>
        <recommendedName>
            <fullName evidence="4">Neuropeptide-like precursor 1-2</fullName>
            <shortName evidence="4">NPLP1-2</shortName>
        </recommendedName>
    </component>
    <component>
        <recommendedName>
            <fullName evidence="4">Neuropeptide-like precursor 1-3</fullName>
            <shortName evidence="4">NPLP1-3</shortName>
        </recommendedName>
    </component>
    <component>
        <recommendedName>
            <fullName evidence="4">Neuropeptide-like precursor 1-4</fullName>
            <shortName evidence="4">NPLP1-4</shortName>
        </recommendedName>
    </component>
    <component>
        <recommendedName>
            <fullName evidence="4">YRVamide</fullName>
        </recommendedName>
    </component>
    <component>
        <recommendedName>
            <fullName evidence="4">Extended YRVamide</fullName>
        </recommendedName>
    </component>
    <component>
        <recommendedName>
            <fullName evidence="4">Neuropeptide-like precursor 1-6</fullName>
            <shortName evidence="4">NPLP1-6</shortName>
        </recommendedName>
    </component>
    <component>
        <recommendedName>
            <fullName evidence="4">Neuropeptide-like precursor 1-6(1-11)</fullName>
            <shortName evidence="4">NPLP1-6(1-11)</shortName>
        </recommendedName>
    </component>
    <component>
        <recommendedName>
            <fullName evidence="4">Neuropeptide-like precursor 1-9</fullName>
            <shortName evidence="4">NPLP1-9</shortName>
        </recommendedName>
    </component>
</protein>
<proteinExistence type="evidence at protein level"/>
<reference evidence="5" key="1">
    <citation type="journal article" date="2018" name="J. Proteome Res.">
        <title>Mating-induced differential peptidomics of neuropeptides and protein hormones in Agrotis ipsilon moths.</title>
        <authorList>
            <person name="Diesner M."/>
            <person name="Gallot A."/>
            <person name="Binz H."/>
            <person name="Gaertner C."/>
            <person name="Vitecek S."/>
            <person name="Kahnt J."/>
            <person name="Schachtner J."/>
            <person name="Jacquin-Joly E."/>
            <person name="Gadenne C."/>
        </authorList>
    </citation>
    <scope>NUCLEOTIDE SEQUENCE [MRNA]</scope>
    <scope>PROTEIN SEQUENCE OF 35-48; 50-68; 71-103; 106-119; 122-143; 145-157 AND 235-256</scope>
    <scope>TISSUE SPECIFICITY</scope>
    <scope>MASS SPECTROMETRY</scope>
    <scope>IDENTIFICATION BY MASS SPECTROMETRY</scope>
    <scope>AMIDATION AT VAL-133</scope>
</reference>